<feature type="chain" id="PRO_0000202672" description="Ubiquitin thioesterase OTU1">
    <location>
        <begin position="1"/>
        <end position="301"/>
    </location>
</feature>
<feature type="domain" description="OTU" evidence="3">
    <location>
        <begin position="109"/>
        <end position="229"/>
    </location>
</feature>
<feature type="zinc finger region" description="C2H2-type">
    <location>
        <begin position="270"/>
        <end position="294"/>
    </location>
</feature>
<feature type="region of interest" description="UBX-like" evidence="1">
    <location>
        <begin position="4"/>
        <end position="80"/>
    </location>
</feature>
<feature type="region of interest" description="Cys-loop" evidence="1">
    <location>
        <begin position="114"/>
        <end position="120"/>
    </location>
</feature>
<feature type="region of interest" description="Variable-loop" evidence="1">
    <location>
        <begin position="169"/>
        <end position="179"/>
    </location>
</feature>
<feature type="region of interest" description="His-loop" evidence="1">
    <location>
        <begin position="218"/>
        <end position="222"/>
    </location>
</feature>
<feature type="region of interest" description="S2 site" evidence="1">
    <location>
        <begin position="243"/>
        <end position="248"/>
    </location>
</feature>
<feature type="active site" evidence="2">
    <location>
        <position position="117"/>
    </location>
</feature>
<feature type="active site" description="Nucleophile" evidence="8">
    <location>
        <position position="120"/>
    </location>
</feature>
<feature type="active site" evidence="1">
    <location>
        <position position="222"/>
    </location>
</feature>
<feature type="active site" evidence="2">
    <location>
        <position position="294"/>
    </location>
</feature>
<feature type="binding site" evidence="1">
    <location>
        <position position="221"/>
    </location>
    <ligand>
        <name>substrate</name>
    </ligand>
</feature>
<feature type="cross-link" description="Glycyl lysine isopeptide (Lys-Gly) (interchain with G-Cter in ubiquitin)" evidence="9">
    <location>
        <position position="160"/>
    </location>
</feature>
<feature type="mutagenesis site" description="Loss of function." evidence="7">
    <original>C</original>
    <variation>S</variation>
    <location>
        <position position="120"/>
    </location>
</feature>
<feature type="strand" evidence="11">
    <location>
        <begin position="1"/>
        <end position="7"/>
    </location>
</feature>
<feature type="strand" evidence="11">
    <location>
        <begin position="10"/>
        <end position="16"/>
    </location>
</feature>
<feature type="helix" evidence="11">
    <location>
        <begin position="22"/>
        <end position="28"/>
    </location>
</feature>
<feature type="strand" evidence="11">
    <location>
        <begin position="34"/>
        <end position="38"/>
    </location>
</feature>
<feature type="turn" evidence="11">
    <location>
        <begin position="39"/>
        <end position="42"/>
    </location>
</feature>
<feature type="strand" evidence="11">
    <location>
        <begin position="43"/>
        <end position="46"/>
    </location>
</feature>
<feature type="helix" evidence="11">
    <location>
        <begin position="54"/>
        <end position="56"/>
    </location>
</feature>
<feature type="helix" evidence="11">
    <location>
        <begin position="60"/>
        <end position="62"/>
    </location>
</feature>
<feature type="strand" evidence="11">
    <location>
        <begin position="68"/>
        <end position="73"/>
    </location>
</feature>
<feature type="strand" evidence="10">
    <location>
        <begin position="98"/>
        <end position="101"/>
    </location>
</feature>
<feature type="turn" evidence="10">
    <location>
        <begin position="102"/>
        <end position="104"/>
    </location>
</feature>
<feature type="strand" evidence="10">
    <location>
        <begin position="107"/>
        <end position="112"/>
    </location>
</feature>
<feature type="helix" evidence="10">
    <location>
        <begin position="120"/>
        <end position="130"/>
    </location>
</feature>
<feature type="helix" evidence="10">
    <location>
        <begin position="136"/>
        <end position="148"/>
    </location>
</feature>
<feature type="turn" evidence="10">
    <location>
        <begin position="150"/>
        <end position="153"/>
    </location>
</feature>
<feature type="helix" evidence="10">
    <location>
        <begin position="155"/>
        <end position="158"/>
    </location>
</feature>
<feature type="helix" evidence="10">
    <location>
        <begin position="162"/>
        <end position="168"/>
    </location>
</feature>
<feature type="helix" evidence="10">
    <location>
        <begin position="178"/>
        <end position="188"/>
    </location>
</feature>
<feature type="strand" evidence="10">
    <location>
        <begin position="191"/>
        <end position="196"/>
    </location>
</feature>
<feature type="turn" evidence="10">
    <location>
        <begin position="197"/>
        <end position="200"/>
    </location>
</feature>
<feature type="strand" evidence="10">
    <location>
        <begin position="201"/>
        <end position="206"/>
    </location>
</feature>
<feature type="turn" evidence="10">
    <location>
        <begin position="207"/>
        <end position="209"/>
    </location>
</feature>
<feature type="strand" evidence="10">
    <location>
        <begin position="211"/>
        <end position="218"/>
    </location>
</feature>
<feature type="strand" evidence="10">
    <location>
        <begin position="223"/>
        <end position="228"/>
    </location>
</feature>
<feature type="turn" evidence="10">
    <location>
        <begin position="229"/>
        <end position="231"/>
    </location>
</feature>
<feature type="helix" evidence="10">
    <location>
        <begin position="242"/>
        <end position="258"/>
    </location>
</feature>
<organism>
    <name type="scientific">Saccharomyces cerevisiae (strain ATCC 204508 / S288c)</name>
    <name type="common">Baker's yeast</name>
    <dbReference type="NCBI Taxonomy" id="559292"/>
    <lineage>
        <taxon>Eukaryota</taxon>
        <taxon>Fungi</taxon>
        <taxon>Dikarya</taxon>
        <taxon>Ascomycota</taxon>
        <taxon>Saccharomycotina</taxon>
        <taxon>Saccharomycetes</taxon>
        <taxon>Saccharomycetales</taxon>
        <taxon>Saccharomycetaceae</taxon>
        <taxon>Saccharomyces</taxon>
    </lineage>
</organism>
<dbReference type="EC" id="3.4.19.12" evidence="1"/>
<dbReference type="EMBL" id="D50617">
    <property type="protein sequence ID" value="BAA09197.1"/>
    <property type="molecule type" value="Genomic_DNA"/>
</dbReference>
<dbReference type="EMBL" id="BK006940">
    <property type="protein sequence ID" value="DAA12396.1"/>
    <property type="molecule type" value="Genomic_DNA"/>
</dbReference>
<dbReference type="PIR" id="S56211">
    <property type="entry name" value="S56211"/>
</dbReference>
<dbReference type="RefSeq" id="NP_116610.1">
    <property type="nucleotide sequence ID" value="NM_001179923.1"/>
</dbReference>
<dbReference type="PDB" id="3BY4">
    <property type="method" value="X-ray"/>
    <property type="resolution" value="1.55 A"/>
    <property type="chains" value="A=91-301"/>
</dbReference>
<dbReference type="PDB" id="3C0R">
    <property type="method" value="X-ray"/>
    <property type="resolution" value="2.31 A"/>
    <property type="chains" value="A/C=91-301"/>
</dbReference>
<dbReference type="PDB" id="4KDI">
    <property type="method" value="X-ray"/>
    <property type="resolution" value="1.86 A"/>
    <property type="chains" value="C/D=1-73"/>
</dbReference>
<dbReference type="PDB" id="4KDL">
    <property type="method" value="X-ray"/>
    <property type="resolution" value="1.81 A"/>
    <property type="chains" value="B=1-73"/>
</dbReference>
<dbReference type="PDBsum" id="3BY4"/>
<dbReference type="PDBsum" id="3C0R"/>
<dbReference type="PDBsum" id="4KDI"/>
<dbReference type="PDBsum" id="4KDL"/>
<dbReference type="SMR" id="P43558"/>
<dbReference type="BioGRID" id="31103">
    <property type="interactions" value="110"/>
</dbReference>
<dbReference type="DIP" id="DIP-4672N"/>
<dbReference type="FunCoup" id="P43558">
    <property type="interactions" value="844"/>
</dbReference>
<dbReference type="IntAct" id="P43558">
    <property type="interactions" value="13"/>
</dbReference>
<dbReference type="MINT" id="P43558"/>
<dbReference type="STRING" id="4932.YFL044C"/>
<dbReference type="MEROPS" id="C85.006"/>
<dbReference type="TCDB" id="3.A.16.1.2">
    <property type="family name" value="the endoplasmic reticular retrotranslocon (er-rt) family"/>
</dbReference>
<dbReference type="iPTMnet" id="P43558"/>
<dbReference type="PaxDb" id="4932-YFL044C"/>
<dbReference type="PeptideAtlas" id="P43558"/>
<dbReference type="EnsemblFungi" id="YFL044C_mRNA">
    <property type="protein sequence ID" value="YFL044C"/>
    <property type="gene ID" value="YFL044C"/>
</dbReference>
<dbReference type="GeneID" id="850500"/>
<dbReference type="KEGG" id="sce:YFL044C"/>
<dbReference type="AGR" id="SGD:S000001850"/>
<dbReference type="SGD" id="S000001850">
    <property type="gene designation" value="OTU1"/>
</dbReference>
<dbReference type="VEuPathDB" id="FungiDB:YFL044C"/>
<dbReference type="eggNOG" id="KOG3288">
    <property type="taxonomic scope" value="Eukaryota"/>
</dbReference>
<dbReference type="GeneTree" id="ENSGT00390000009989"/>
<dbReference type="HOGENOM" id="CLU_049327_0_0_1"/>
<dbReference type="InParanoid" id="P43558"/>
<dbReference type="OMA" id="TRCILVY"/>
<dbReference type="OrthoDB" id="65596at2759"/>
<dbReference type="BioCyc" id="YEAST:G3O-30420-MONOMER"/>
<dbReference type="Reactome" id="R-SCE-5689896">
    <property type="pathway name" value="Ovarian tumor domain proteases"/>
</dbReference>
<dbReference type="BioGRID-ORCS" id="850500">
    <property type="hits" value="5 hits in 10 CRISPR screens"/>
</dbReference>
<dbReference type="EvolutionaryTrace" id="P43558"/>
<dbReference type="PRO" id="PR:P43558"/>
<dbReference type="Proteomes" id="UP000002311">
    <property type="component" value="Chromosome VI"/>
</dbReference>
<dbReference type="RNAct" id="P43558">
    <property type="molecule type" value="protein"/>
</dbReference>
<dbReference type="GO" id="GO:0005737">
    <property type="term" value="C:cytoplasm"/>
    <property type="evidence" value="ECO:0007005"/>
    <property type="project" value="SGD"/>
</dbReference>
<dbReference type="GO" id="GO:0005634">
    <property type="term" value="C:nucleus"/>
    <property type="evidence" value="ECO:0007005"/>
    <property type="project" value="SGD"/>
</dbReference>
<dbReference type="GO" id="GO:0004843">
    <property type="term" value="F:cysteine-type deubiquitinase activity"/>
    <property type="evidence" value="ECO:0000314"/>
    <property type="project" value="SGD"/>
</dbReference>
<dbReference type="GO" id="GO:0008270">
    <property type="term" value="F:zinc ion binding"/>
    <property type="evidence" value="ECO:0007669"/>
    <property type="project" value="UniProtKB-KW"/>
</dbReference>
<dbReference type="GO" id="GO:0030968">
    <property type="term" value="P:endoplasmic reticulum unfolded protein response"/>
    <property type="evidence" value="ECO:0000318"/>
    <property type="project" value="GO_Central"/>
</dbReference>
<dbReference type="GO" id="GO:0036503">
    <property type="term" value="P:ERAD pathway"/>
    <property type="evidence" value="ECO:0000318"/>
    <property type="project" value="GO_Central"/>
</dbReference>
<dbReference type="GO" id="GO:0016579">
    <property type="term" value="P:protein deubiquitination"/>
    <property type="evidence" value="ECO:0000314"/>
    <property type="project" value="SGD"/>
</dbReference>
<dbReference type="GO" id="GO:0006355">
    <property type="term" value="P:regulation of DNA-templated transcription"/>
    <property type="evidence" value="ECO:0000315"/>
    <property type="project" value="SGD"/>
</dbReference>
<dbReference type="CDD" id="cd22745">
    <property type="entry name" value="OTU_OTU1"/>
    <property type="match status" value="1"/>
</dbReference>
<dbReference type="CDD" id="cd17059">
    <property type="entry name" value="Ubl_OTU1"/>
    <property type="match status" value="1"/>
</dbReference>
<dbReference type="FunFam" id="3.10.20.90:FF:000368">
    <property type="entry name" value="Ubiquitin thioesterase OTU1"/>
    <property type="match status" value="1"/>
</dbReference>
<dbReference type="FunFam" id="3.90.70.80:FF:000021">
    <property type="entry name" value="Ubiquitin thioesterase OTU1"/>
    <property type="match status" value="1"/>
</dbReference>
<dbReference type="Gene3D" id="3.90.70.80">
    <property type="match status" value="1"/>
</dbReference>
<dbReference type="Gene3D" id="3.10.20.90">
    <property type="entry name" value="Phosphatidylinositol 3-kinase Catalytic Subunit, Chain A, domain 1"/>
    <property type="match status" value="1"/>
</dbReference>
<dbReference type="InterPro" id="IPR048857">
    <property type="entry name" value="OTU1_Ubl"/>
</dbReference>
<dbReference type="InterPro" id="IPR003323">
    <property type="entry name" value="OTU_dom"/>
</dbReference>
<dbReference type="InterPro" id="IPR038765">
    <property type="entry name" value="Papain-like_cys_pep_sf"/>
</dbReference>
<dbReference type="InterPro" id="IPR013087">
    <property type="entry name" value="Znf_C2H2_type"/>
</dbReference>
<dbReference type="PANTHER" id="PTHR13312">
    <property type="entry name" value="HIV-INDUCED PROTEIN-7-LIKE PROTEASE"/>
    <property type="match status" value="1"/>
</dbReference>
<dbReference type="PANTHER" id="PTHR13312:SF0">
    <property type="entry name" value="UBIQUITIN THIOESTERASE OTU1"/>
    <property type="match status" value="1"/>
</dbReference>
<dbReference type="Pfam" id="PF02338">
    <property type="entry name" value="OTU"/>
    <property type="match status" value="1"/>
</dbReference>
<dbReference type="Pfam" id="PF21403">
    <property type="entry name" value="OTU1_UBXL"/>
    <property type="match status" value="1"/>
</dbReference>
<dbReference type="Pfam" id="PF24560">
    <property type="entry name" value="zf-C2H2_OTU1_C"/>
    <property type="match status" value="1"/>
</dbReference>
<dbReference type="SUPFAM" id="SSF54001">
    <property type="entry name" value="Cysteine proteinases"/>
    <property type="match status" value="1"/>
</dbReference>
<dbReference type="PROSITE" id="PS50802">
    <property type="entry name" value="OTU"/>
    <property type="match status" value="1"/>
</dbReference>
<dbReference type="PROSITE" id="PS00028">
    <property type="entry name" value="ZINC_FINGER_C2H2_1"/>
    <property type="match status" value="1"/>
</dbReference>
<comment type="function">
    <text evidence="6 7">Hydrolase that can remove conjugated ubiquitin from proteins and may therefore play an important regulatory role at the level of protein turnover by preventing degradation. Participates in the regulation of the ubiquitin conjugation pathway involving CDC48 by hindering multiubiquitination of substrates at the CDC48 chaperone. May be indirectly involved in PIS1 gene expression.</text>
</comment>
<comment type="catalytic activity">
    <reaction evidence="1">
        <text>Thiol-dependent hydrolysis of ester, thioester, amide, peptide and isopeptide bonds formed by the C-terminal Gly of ubiquitin (a 76-residue protein attached to proteins as an intracellular targeting signal).</text>
        <dbReference type="EC" id="3.4.19.12"/>
    </reaction>
</comment>
<comment type="subunit">
    <text evidence="7">Forms a complex composed of CDC48, NPL4, UFD1, DOA1, SHP1 and deubiquitinase OTU1; within the complex interacts with CDC48 and DOA1/UFD3.</text>
</comment>
<comment type="interaction">
    <interactant intactId="EBI-22837">
        <id>P43558</id>
    </interactant>
    <interactant intactId="EBI-4308">
        <id>P25694</id>
        <label>CDC48</label>
    </interactant>
    <organismsDiffer>false</organismsDiffer>
    <experiments>3</experiments>
</comment>
<comment type="subcellular location">
    <subcellularLocation>
        <location evidence="4">Cytoplasm</location>
    </subcellularLocation>
    <subcellularLocation>
        <location evidence="4">Nucleus</location>
    </subcellularLocation>
</comment>
<comment type="domain">
    <text evidence="7">The OTU domain mediates the hydrolase activity and the interaction with CDC48.</text>
</comment>
<comment type="miscellaneous">
    <text evidence="5">Present with 2770 molecules/cell in log phase SD medium.</text>
</comment>
<protein>
    <recommendedName>
        <fullName>Ubiquitin thioesterase OTU1</fullName>
        <ecNumber evidence="1">3.4.19.12</ecNumber>
    </recommendedName>
    <alternativeName>
        <fullName>OTU domain-containing protein 1</fullName>
    </alternativeName>
</protein>
<evidence type="ECO:0000250" key="1">
    <source>
        <dbReference type="UniProtKB" id="Q5VVQ6"/>
    </source>
</evidence>
<evidence type="ECO:0000250" key="2">
    <source>
        <dbReference type="UniProtKB" id="Q96FW1"/>
    </source>
</evidence>
<evidence type="ECO:0000255" key="3">
    <source>
        <dbReference type="PROSITE-ProRule" id="PRU00139"/>
    </source>
</evidence>
<evidence type="ECO:0000269" key="4">
    <source>
    </source>
</evidence>
<evidence type="ECO:0000269" key="5">
    <source>
    </source>
</evidence>
<evidence type="ECO:0000269" key="6">
    <source>
    </source>
</evidence>
<evidence type="ECO:0000269" key="7">
    <source>
    </source>
</evidence>
<evidence type="ECO:0000305" key="8"/>
<evidence type="ECO:0007744" key="9">
    <source>
    </source>
</evidence>
<evidence type="ECO:0007829" key="10">
    <source>
        <dbReference type="PDB" id="3BY4"/>
    </source>
</evidence>
<evidence type="ECO:0007829" key="11">
    <source>
        <dbReference type="PDB" id="4KDL"/>
    </source>
</evidence>
<keyword id="KW-0002">3D-structure</keyword>
<keyword id="KW-0963">Cytoplasm</keyword>
<keyword id="KW-0378">Hydrolase</keyword>
<keyword id="KW-1017">Isopeptide bond</keyword>
<keyword id="KW-0479">Metal-binding</keyword>
<keyword id="KW-0539">Nucleus</keyword>
<keyword id="KW-0645">Protease</keyword>
<keyword id="KW-1185">Reference proteome</keyword>
<keyword id="KW-0788">Thiol protease</keyword>
<keyword id="KW-0832">Ubl conjugation</keyword>
<keyword id="KW-0833">Ubl conjugation pathway</keyword>
<keyword id="KW-0862">Zinc</keyword>
<keyword id="KW-0863">Zinc-finger</keyword>
<reference key="1">
    <citation type="journal article" date="1995" name="Nat. Genet.">
        <title>Analysis of the nucleotide sequence of chromosome VI from Saccharomyces cerevisiae.</title>
        <authorList>
            <person name="Murakami Y."/>
            <person name="Naitou M."/>
            <person name="Hagiwara H."/>
            <person name="Shibata T."/>
            <person name="Ozawa M."/>
            <person name="Sasanuma S."/>
            <person name="Sasanuma M."/>
            <person name="Tsuchiya Y."/>
            <person name="Soeda E."/>
            <person name="Yokoyama K."/>
            <person name="Yamazaki M."/>
            <person name="Tashiro H."/>
            <person name="Eki T."/>
        </authorList>
    </citation>
    <scope>NUCLEOTIDE SEQUENCE [LARGE SCALE GENOMIC DNA]</scope>
    <source>
        <strain>ATCC 204508 / S288c</strain>
    </source>
</reference>
<reference key="2">
    <citation type="journal article" date="2014" name="G3 (Bethesda)">
        <title>The reference genome sequence of Saccharomyces cerevisiae: Then and now.</title>
        <authorList>
            <person name="Engel S.R."/>
            <person name="Dietrich F.S."/>
            <person name="Fisk D.G."/>
            <person name="Binkley G."/>
            <person name="Balakrishnan R."/>
            <person name="Costanzo M.C."/>
            <person name="Dwight S.S."/>
            <person name="Hitz B.C."/>
            <person name="Karra K."/>
            <person name="Nash R.S."/>
            <person name="Weng S."/>
            <person name="Wong E.D."/>
            <person name="Lloyd P."/>
            <person name="Skrzypek M.S."/>
            <person name="Miyasato S.R."/>
            <person name="Simison M."/>
            <person name="Cherry J.M."/>
        </authorList>
    </citation>
    <scope>GENOME REANNOTATION</scope>
    <source>
        <strain>ATCC 204508 / S288c</strain>
    </source>
</reference>
<reference key="3">
    <citation type="journal article" date="2003" name="Nature">
        <title>Global analysis of protein localization in budding yeast.</title>
        <authorList>
            <person name="Huh W.-K."/>
            <person name="Falvo J.V."/>
            <person name="Gerke L.C."/>
            <person name="Carroll A.S."/>
            <person name="Howson R.W."/>
            <person name="Weissman J.S."/>
            <person name="O'Shea E.K."/>
        </authorList>
    </citation>
    <scope>SUBCELLULAR LOCATION [LARGE SCALE ANALYSIS]</scope>
</reference>
<reference key="4">
    <citation type="journal article" date="2003" name="Nature">
        <title>Global analysis of protein expression in yeast.</title>
        <authorList>
            <person name="Ghaemmaghami S."/>
            <person name="Huh W.-K."/>
            <person name="Bower K."/>
            <person name="Howson R.W."/>
            <person name="Belle A."/>
            <person name="Dephoure N."/>
            <person name="O'Shea E.K."/>
            <person name="Weissman J.S."/>
        </authorList>
    </citation>
    <scope>LEVEL OF PROTEIN EXPRESSION [LARGE SCALE ANALYSIS]</scope>
</reference>
<reference key="5">
    <citation type="journal article" date="2005" name="Eukaryot. Cell">
        <title>Genomic analysis of PIS1 gene expression.</title>
        <authorList>
            <person name="Gardocki M.E."/>
            <person name="Bakewell M."/>
            <person name="Kamath D."/>
            <person name="Robinson K."/>
            <person name="Borovicka K."/>
            <person name="Lopes J.M."/>
        </authorList>
    </citation>
    <scope>FUNCTION</scope>
</reference>
<reference key="6">
    <citation type="journal article" date="2006" name="Mol. Cell">
        <title>Functional division of substrate processing cofactors of the ubiquitin-selective Cdc48 chaperone.</title>
        <authorList>
            <person name="Rumpf S."/>
            <person name="Jentsch S."/>
        </authorList>
    </citation>
    <scope>FUNCTION</scope>
    <scope>DOMAIN OTU</scope>
    <scope>IDENTIFICATION IN A COMPLEX WITH NPL4; UFD1; CDC48; DOA1 AND SHP1</scope>
    <scope>INTERACTION WITH DOA1 AND CDC48</scope>
    <scope>MUTAGENESIS OF CYS-120</scope>
</reference>
<reference key="7">
    <citation type="journal article" date="2012" name="Proteomics">
        <title>Sites of ubiquitin attachment in Saccharomyces cerevisiae.</title>
        <authorList>
            <person name="Starita L.M."/>
            <person name="Lo R.S."/>
            <person name="Eng J.K."/>
            <person name="von Haller P.D."/>
            <person name="Fields S."/>
        </authorList>
    </citation>
    <scope>UBIQUITINATION [LARGE SCALE ANALYSIS] AT LYS-160</scope>
    <scope>IDENTIFICATION BY MASS SPECTROMETRY [LARGE SCALE ANALYSIS]</scope>
</reference>
<proteinExistence type="evidence at protein level"/>
<name>OTU1_YEAST</name>
<gene>
    <name type="primary">OTU1</name>
    <name type="ordered locus">YFL044C</name>
</gene>
<sequence length="301" mass="33510">MKLKVTGAGINQVVTLKQDATLNDLIEHINVDVKTMRFGYPPQRINLQGEDASLGQTQLDELGINSGEKITIESSDSNESFSLPPPQPKPKRVLKSTEMSIGGSGENVLSVHPVLDDNSCLFHAIAYGIFKQDSVRDLREMVSKEVLNNPVKFNDAILDKPNKDYAQWILKMESWGGAIEIGIISDALAVAIYVVDIDAVKIEKFNEDKFDNYILILFNGIHYDSLTMNEFKTVFNKNQPESDDVLTAALQLASNLKQTGYSFNTHKAQIKCNTCQMTFVGEREVARHAESTGHVDFGQNR</sequence>
<accession>P43558</accession>
<accession>D6VTI6</accession>